<accession>P0DB39</accession>
<accession>Q878L0</accession>
<accession>Q8K7R7</accession>
<keyword id="KW-0413">Isomerase</keyword>
<keyword id="KW-0460">Magnesium</keyword>
<keyword id="KW-0479">Metal-binding</keyword>
<keyword id="KW-0597">Phosphoprotein</keyword>
<comment type="function">
    <text evidence="1">Catalyzes the conversion of glucosamine-6-phosphate to glucosamine-1-phosphate.</text>
</comment>
<comment type="catalytic activity">
    <reaction evidence="1">
        <text>alpha-D-glucosamine 1-phosphate = D-glucosamine 6-phosphate</text>
        <dbReference type="Rhea" id="RHEA:23424"/>
        <dbReference type="ChEBI" id="CHEBI:58516"/>
        <dbReference type="ChEBI" id="CHEBI:58725"/>
        <dbReference type="EC" id="5.4.2.10"/>
    </reaction>
</comment>
<comment type="cofactor">
    <cofactor evidence="1">
        <name>Mg(2+)</name>
        <dbReference type="ChEBI" id="CHEBI:18420"/>
    </cofactor>
    <text evidence="1">Binds 1 Mg(2+) ion per subunit.</text>
</comment>
<comment type="PTM">
    <text evidence="1">Activated by phosphorylation.</text>
</comment>
<comment type="similarity">
    <text evidence="1">Belongs to the phosphohexose mutase family.</text>
</comment>
<protein>
    <recommendedName>
        <fullName evidence="1">Phosphoglucosamine mutase</fullName>
        <ecNumber evidence="1">5.4.2.10</ecNumber>
    </recommendedName>
</protein>
<reference key="1">
    <citation type="journal article" date="2003" name="Genome Res.">
        <title>Genome sequence of an M3 strain of Streptococcus pyogenes reveals a large-scale genomic rearrangement in invasive strains and new insights into phage evolution.</title>
        <authorList>
            <person name="Nakagawa I."/>
            <person name="Kurokawa K."/>
            <person name="Yamashita A."/>
            <person name="Nakata M."/>
            <person name="Tomiyasu Y."/>
            <person name="Okahashi N."/>
            <person name="Kawabata S."/>
            <person name="Yamazaki K."/>
            <person name="Shiba T."/>
            <person name="Yasunaga T."/>
            <person name="Hayashi H."/>
            <person name="Hattori M."/>
            <person name="Hamada S."/>
        </authorList>
    </citation>
    <scope>NUCLEOTIDE SEQUENCE [LARGE SCALE GENOMIC DNA]</scope>
    <source>
        <strain>SSI-1</strain>
    </source>
</reference>
<dbReference type="EC" id="5.4.2.10" evidence="1"/>
<dbReference type="EMBL" id="BA000034">
    <property type="protein sequence ID" value="BAC64277.1"/>
    <property type="molecule type" value="Genomic_DNA"/>
</dbReference>
<dbReference type="RefSeq" id="WP_011106808.1">
    <property type="nucleotide sequence ID" value="NC_004606.1"/>
</dbReference>
<dbReference type="SMR" id="P0DB39"/>
<dbReference type="GeneID" id="69900941"/>
<dbReference type="KEGG" id="sps:SPs1182"/>
<dbReference type="HOGENOM" id="CLU_016950_7_0_9"/>
<dbReference type="GO" id="GO:0005829">
    <property type="term" value="C:cytosol"/>
    <property type="evidence" value="ECO:0007669"/>
    <property type="project" value="TreeGrafter"/>
</dbReference>
<dbReference type="GO" id="GO:0000287">
    <property type="term" value="F:magnesium ion binding"/>
    <property type="evidence" value="ECO:0007669"/>
    <property type="project" value="UniProtKB-UniRule"/>
</dbReference>
<dbReference type="GO" id="GO:0008966">
    <property type="term" value="F:phosphoglucosamine mutase activity"/>
    <property type="evidence" value="ECO:0007669"/>
    <property type="project" value="UniProtKB-UniRule"/>
</dbReference>
<dbReference type="GO" id="GO:0004615">
    <property type="term" value="F:phosphomannomutase activity"/>
    <property type="evidence" value="ECO:0007669"/>
    <property type="project" value="TreeGrafter"/>
</dbReference>
<dbReference type="GO" id="GO:0005975">
    <property type="term" value="P:carbohydrate metabolic process"/>
    <property type="evidence" value="ECO:0007669"/>
    <property type="project" value="InterPro"/>
</dbReference>
<dbReference type="GO" id="GO:0009252">
    <property type="term" value="P:peptidoglycan biosynthetic process"/>
    <property type="evidence" value="ECO:0007669"/>
    <property type="project" value="TreeGrafter"/>
</dbReference>
<dbReference type="GO" id="GO:0006048">
    <property type="term" value="P:UDP-N-acetylglucosamine biosynthetic process"/>
    <property type="evidence" value="ECO:0007669"/>
    <property type="project" value="TreeGrafter"/>
</dbReference>
<dbReference type="CDD" id="cd05802">
    <property type="entry name" value="GlmM"/>
    <property type="match status" value="1"/>
</dbReference>
<dbReference type="FunFam" id="3.30.310.50:FF:000001">
    <property type="entry name" value="Phosphoglucosamine mutase"/>
    <property type="match status" value="1"/>
</dbReference>
<dbReference type="FunFam" id="3.40.120.10:FF:000001">
    <property type="entry name" value="Phosphoglucosamine mutase"/>
    <property type="match status" value="1"/>
</dbReference>
<dbReference type="FunFam" id="3.40.120.10:FF:000002">
    <property type="entry name" value="Phosphoglucosamine mutase"/>
    <property type="match status" value="1"/>
</dbReference>
<dbReference type="Gene3D" id="3.40.120.10">
    <property type="entry name" value="Alpha-D-Glucose-1,6-Bisphosphate, subunit A, domain 3"/>
    <property type="match status" value="3"/>
</dbReference>
<dbReference type="Gene3D" id="3.30.310.50">
    <property type="entry name" value="Alpha-D-phosphohexomutase, C-terminal domain"/>
    <property type="match status" value="1"/>
</dbReference>
<dbReference type="HAMAP" id="MF_01554_B">
    <property type="entry name" value="GlmM_B"/>
    <property type="match status" value="1"/>
</dbReference>
<dbReference type="InterPro" id="IPR005844">
    <property type="entry name" value="A-D-PHexomutase_a/b/a-I"/>
</dbReference>
<dbReference type="InterPro" id="IPR016055">
    <property type="entry name" value="A-D-PHexomutase_a/b/a-I/II/III"/>
</dbReference>
<dbReference type="InterPro" id="IPR005845">
    <property type="entry name" value="A-D-PHexomutase_a/b/a-II"/>
</dbReference>
<dbReference type="InterPro" id="IPR005846">
    <property type="entry name" value="A-D-PHexomutase_a/b/a-III"/>
</dbReference>
<dbReference type="InterPro" id="IPR005843">
    <property type="entry name" value="A-D-PHexomutase_C"/>
</dbReference>
<dbReference type="InterPro" id="IPR036900">
    <property type="entry name" value="A-D-PHexomutase_C_sf"/>
</dbReference>
<dbReference type="InterPro" id="IPR016066">
    <property type="entry name" value="A-D-PHexomutase_CS"/>
</dbReference>
<dbReference type="InterPro" id="IPR005841">
    <property type="entry name" value="Alpha-D-phosphohexomutase_SF"/>
</dbReference>
<dbReference type="InterPro" id="IPR006352">
    <property type="entry name" value="GlmM_bact"/>
</dbReference>
<dbReference type="InterPro" id="IPR050060">
    <property type="entry name" value="Phosphoglucosamine_mutase"/>
</dbReference>
<dbReference type="NCBIfam" id="TIGR01455">
    <property type="entry name" value="glmM"/>
    <property type="match status" value="1"/>
</dbReference>
<dbReference type="PANTHER" id="PTHR42946:SF1">
    <property type="entry name" value="PHOSPHOGLUCOMUTASE (ALPHA-D-GLUCOSE-1,6-BISPHOSPHATE-DEPENDENT)"/>
    <property type="match status" value="1"/>
</dbReference>
<dbReference type="PANTHER" id="PTHR42946">
    <property type="entry name" value="PHOSPHOHEXOSE MUTASE"/>
    <property type="match status" value="1"/>
</dbReference>
<dbReference type="Pfam" id="PF02878">
    <property type="entry name" value="PGM_PMM_I"/>
    <property type="match status" value="1"/>
</dbReference>
<dbReference type="Pfam" id="PF02879">
    <property type="entry name" value="PGM_PMM_II"/>
    <property type="match status" value="1"/>
</dbReference>
<dbReference type="Pfam" id="PF02880">
    <property type="entry name" value="PGM_PMM_III"/>
    <property type="match status" value="1"/>
</dbReference>
<dbReference type="Pfam" id="PF00408">
    <property type="entry name" value="PGM_PMM_IV"/>
    <property type="match status" value="1"/>
</dbReference>
<dbReference type="PRINTS" id="PR00509">
    <property type="entry name" value="PGMPMM"/>
</dbReference>
<dbReference type="SUPFAM" id="SSF55957">
    <property type="entry name" value="Phosphoglucomutase, C-terminal domain"/>
    <property type="match status" value="1"/>
</dbReference>
<dbReference type="SUPFAM" id="SSF53738">
    <property type="entry name" value="Phosphoglucomutase, first 3 domains"/>
    <property type="match status" value="3"/>
</dbReference>
<dbReference type="PROSITE" id="PS00710">
    <property type="entry name" value="PGM_PMM"/>
    <property type="match status" value="1"/>
</dbReference>
<sequence>MGKYFGTDGVRGEANVELTPELAFQLGRFGGYVLSQHETERPKVFVARDTRISGEMLESALIAGLLSVGIEVYKLGVLATPGVSYLVRTEKASAGVMISASHNPALDNGIKFFGNDGFKLADDQELEIEALLDAPEDTLPRPSAEGLGTLVDYPEGLRKYEKFLVTTGTDLSGMTVALDTANGAASVSARDVFLDLNAEIAVIGEKPNGLNINDGVGSTHPEQLQELVKETGADLGLAFDGDSDRLIAVDETGEIVDGDRIMFIIGKYLSEKGLLAHNTIVTTVMSNLGFHKALDKQGINKAITAVGDRYVVEEMRSSGYNLGGEQSGHVIIMDYNTTGDGQLTAIQLAKVMKETGKSLSELAAEVTIYPQKLVNIRVENSMKERAMEVPAIANIIAKMEDEMAGNGRILVRPSGTEPLLRVMAEAPTDAEVDYYVDTIADVVRTEIGCDN</sequence>
<name>GLMM_STRPQ</name>
<proteinExistence type="inferred from homology"/>
<feature type="chain" id="PRO_0000411357" description="Phosphoglucosamine mutase">
    <location>
        <begin position="1"/>
        <end position="451"/>
    </location>
</feature>
<feature type="active site" description="Phosphoserine intermediate" evidence="1">
    <location>
        <position position="101"/>
    </location>
</feature>
<feature type="binding site" description="via phosphate group" evidence="1">
    <location>
        <position position="101"/>
    </location>
    <ligand>
        <name>Mg(2+)</name>
        <dbReference type="ChEBI" id="CHEBI:18420"/>
    </ligand>
</feature>
<feature type="binding site" evidence="1">
    <location>
        <position position="240"/>
    </location>
    <ligand>
        <name>Mg(2+)</name>
        <dbReference type="ChEBI" id="CHEBI:18420"/>
    </ligand>
</feature>
<feature type="binding site" evidence="1">
    <location>
        <position position="242"/>
    </location>
    <ligand>
        <name>Mg(2+)</name>
        <dbReference type="ChEBI" id="CHEBI:18420"/>
    </ligand>
</feature>
<feature type="binding site" evidence="1">
    <location>
        <position position="244"/>
    </location>
    <ligand>
        <name>Mg(2+)</name>
        <dbReference type="ChEBI" id="CHEBI:18420"/>
    </ligand>
</feature>
<feature type="modified residue" description="Phosphoserine" evidence="1">
    <location>
        <position position="101"/>
    </location>
</feature>
<evidence type="ECO:0000255" key="1">
    <source>
        <dbReference type="HAMAP-Rule" id="MF_01554"/>
    </source>
</evidence>
<gene>
    <name evidence="1" type="primary">glmM</name>
    <name type="ordered locus">SPs1182</name>
</gene>
<organism>
    <name type="scientific">Streptococcus pyogenes serotype M3 (strain SSI-1)</name>
    <dbReference type="NCBI Taxonomy" id="193567"/>
    <lineage>
        <taxon>Bacteria</taxon>
        <taxon>Bacillati</taxon>
        <taxon>Bacillota</taxon>
        <taxon>Bacilli</taxon>
        <taxon>Lactobacillales</taxon>
        <taxon>Streptococcaceae</taxon>
        <taxon>Streptococcus</taxon>
    </lineage>
</organism>